<sequence length="382" mass="41662">MIKSALLVLEDGTQFHGRAIGATGSAVGEVVFNTSMTGYQEILTDPSYSRQIVTLTYPHIGNVGTNEADEESSQVHAQGLVIRDLPLIASNFRNTEDLSSYLKRHNIVAIADIDTRKLTRLLREKGAQNGCIIAGDSPDAKLALEKAKAFPGLNGMDLAKEVTTAETYRWTQGSWTLKDGLPEAKSEDDLPFHVVAYDFGAKRNILRMLVDRGCRLTVVPAQTSAEEVLKMNPDGIFLSNGPSDPAPCDYAIEAIKKFLQTDIPVFGICLGHQLLALASGAKTVKMKFGHHGGNHPVKDMDRNVVMITAQNHGFAVDEDSLPANLRVTHKSLFDGTLQGIHRTDKPAFSFQGHPEASPGPHDAAPLFDHFIELIKHYRSSAK</sequence>
<accession>Q8Z9L8</accession>
<accession>O30576</accession>
<protein>
    <recommendedName>
        <fullName evidence="1">Carbamoyl phosphate synthase small chain</fullName>
        <ecNumber evidence="1">6.3.5.5</ecNumber>
    </recommendedName>
    <alternativeName>
        <fullName evidence="1">Carbamoyl phosphate synthetase glutamine chain</fullName>
    </alternativeName>
</protein>
<keyword id="KW-0028">Amino-acid biosynthesis</keyword>
<keyword id="KW-0055">Arginine biosynthesis</keyword>
<keyword id="KW-0067">ATP-binding</keyword>
<keyword id="KW-0315">Glutamine amidotransferase</keyword>
<keyword id="KW-0436">Ligase</keyword>
<keyword id="KW-0547">Nucleotide-binding</keyword>
<keyword id="KW-0665">Pyrimidine biosynthesis</keyword>
<evidence type="ECO:0000255" key="1">
    <source>
        <dbReference type="HAMAP-Rule" id="MF_01209"/>
    </source>
</evidence>
<evidence type="ECO:0000305" key="2"/>
<reference key="1">
    <citation type="submission" date="1997-07" db="EMBL/GenBank/DDBJ databases">
        <title>The sequence of Salmonella typhi carA gene.</title>
        <authorList>
            <person name="Rudiretna A."/>
            <person name="Noer A.S."/>
            <person name="Oei B.L."/>
        </authorList>
    </citation>
    <scope>NUCLEOTIDE SEQUENCE [GENOMIC DNA]</scope>
</reference>
<reference key="2">
    <citation type="journal article" date="2001" name="Nature">
        <title>Complete genome sequence of a multiple drug resistant Salmonella enterica serovar Typhi CT18.</title>
        <authorList>
            <person name="Parkhill J."/>
            <person name="Dougan G."/>
            <person name="James K.D."/>
            <person name="Thomson N.R."/>
            <person name="Pickard D."/>
            <person name="Wain J."/>
            <person name="Churcher C.M."/>
            <person name="Mungall K.L."/>
            <person name="Bentley S.D."/>
            <person name="Holden M.T.G."/>
            <person name="Sebaihia M."/>
            <person name="Baker S."/>
            <person name="Basham D."/>
            <person name="Brooks K."/>
            <person name="Chillingworth T."/>
            <person name="Connerton P."/>
            <person name="Cronin A."/>
            <person name="Davis P."/>
            <person name="Davies R.M."/>
            <person name="Dowd L."/>
            <person name="White N."/>
            <person name="Farrar J."/>
            <person name="Feltwell T."/>
            <person name="Hamlin N."/>
            <person name="Haque A."/>
            <person name="Hien T.T."/>
            <person name="Holroyd S."/>
            <person name="Jagels K."/>
            <person name="Krogh A."/>
            <person name="Larsen T.S."/>
            <person name="Leather S."/>
            <person name="Moule S."/>
            <person name="O'Gaora P."/>
            <person name="Parry C."/>
            <person name="Quail M.A."/>
            <person name="Rutherford K.M."/>
            <person name="Simmonds M."/>
            <person name="Skelton J."/>
            <person name="Stevens K."/>
            <person name="Whitehead S."/>
            <person name="Barrell B.G."/>
        </authorList>
    </citation>
    <scope>NUCLEOTIDE SEQUENCE [LARGE SCALE GENOMIC DNA]</scope>
    <source>
        <strain>CT18</strain>
    </source>
</reference>
<reference key="3">
    <citation type="journal article" date="2003" name="J. Bacteriol.">
        <title>Comparative genomics of Salmonella enterica serovar Typhi strains Ty2 and CT18.</title>
        <authorList>
            <person name="Deng W."/>
            <person name="Liou S.-R."/>
            <person name="Plunkett G. III"/>
            <person name="Mayhew G.F."/>
            <person name="Rose D.J."/>
            <person name="Burland V."/>
            <person name="Kodoyianni V."/>
            <person name="Schwartz D.C."/>
            <person name="Blattner F.R."/>
        </authorList>
    </citation>
    <scope>NUCLEOTIDE SEQUENCE [LARGE SCALE GENOMIC DNA]</scope>
    <source>
        <strain>ATCC 700931 / Ty2</strain>
    </source>
</reference>
<dbReference type="EC" id="6.3.5.5" evidence="1"/>
<dbReference type="EMBL" id="AF012246">
    <property type="protein sequence ID" value="AAB66481.1"/>
    <property type="status" value="ALT_FRAME"/>
    <property type="molecule type" value="Genomic_DNA"/>
</dbReference>
<dbReference type="EMBL" id="AL513382">
    <property type="protein sequence ID" value="CAD01220.1"/>
    <property type="molecule type" value="Genomic_DNA"/>
</dbReference>
<dbReference type="EMBL" id="AE014613">
    <property type="protein sequence ID" value="AAO67800.1"/>
    <property type="molecule type" value="Genomic_DNA"/>
</dbReference>
<dbReference type="RefSeq" id="NP_454676.1">
    <property type="nucleotide sequence ID" value="NC_003198.1"/>
</dbReference>
<dbReference type="RefSeq" id="WP_000597281.1">
    <property type="nucleotide sequence ID" value="NZ_CIUT01000001.1"/>
</dbReference>
<dbReference type="SMR" id="Q8Z9L8"/>
<dbReference type="STRING" id="220341.gene:17584122"/>
<dbReference type="MEROPS" id="C26.954"/>
<dbReference type="KEGG" id="stt:t0067"/>
<dbReference type="KEGG" id="sty:STY0076"/>
<dbReference type="PATRIC" id="fig|220341.7.peg.75"/>
<dbReference type="eggNOG" id="COG0505">
    <property type="taxonomic scope" value="Bacteria"/>
</dbReference>
<dbReference type="HOGENOM" id="CLU_035901_1_1_6"/>
<dbReference type="OMA" id="CFSVQYH"/>
<dbReference type="UniPathway" id="UPA00068">
    <property type="reaction ID" value="UER00171"/>
</dbReference>
<dbReference type="UniPathway" id="UPA00070">
    <property type="reaction ID" value="UER00115"/>
</dbReference>
<dbReference type="Proteomes" id="UP000000541">
    <property type="component" value="Chromosome"/>
</dbReference>
<dbReference type="Proteomes" id="UP000002670">
    <property type="component" value="Chromosome"/>
</dbReference>
<dbReference type="GO" id="GO:0005524">
    <property type="term" value="F:ATP binding"/>
    <property type="evidence" value="ECO:0007669"/>
    <property type="project" value="UniProtKB-UniRule"/>
</dbReference>
<dbReference type="GO" id="GO:0004088">
    <property type="term" value="F:carbamoyl-phosphate synthase (glutamine-hydrolyzing) activity"/>
    <property type="evidence" value="ECO:0007669"/>
    <property type="project" value="UniProtKB-UniRule"/>
</dbReference>
<dbReference type="GO" id="GO:0004359">
    <property type="term" value="F:glutaminase activity"/>
    <property type="evidence" value="ECO:0007669"/>
    <property type="project" value="RHEA"/>
</dbReference>
<dbReference type="GO" id="GO:0006207">
    <property type="term" value="P:'de novo' pyrimidine nucleobase biosynthetic process"/>
    <property type="evidence" value="ECO:0007669"/>
    <property type="project" value="InterPro"/>
</dbReference>
<dbReference type="GO" id="GO:0044205">
    <property type="term" value="P:'de novo' UMP biosynthetic process"/>
    <property type="evidence" value="ECO:0007669"/>
    <property type="project" value="UniProtKB-UniRule"/>
</dbReference>
<dbReference type="GO" id="GO:0006541">
    <property type="term" value="P:glutamine metabolic process"/>
    <property type="evidence" value="ECO:0007669"/>
    <property type="project" value="InterPro"/>
</dbReference>
<dbReference type="GO" id="GO:0006526">
    <property type="term" value="P:L-arginine biosynthetic process"/>
    <property type="evidence" value="ECO:0007669"/>
    <property type="project" value="UniProtKB-UniRule"/>
</dbReference>
<dbReference type="CDD" id="cd01744">
    <property type="entry name" value="GATase1_CPSase"/>
    <property type="match status" value="1"/>
</dbReference>
<dbReference type="FunFam" id="3.40.50.880:FF:000011">
    <property type="entry name" value="Carbamoyl-phosphate synthase small chain"/>
    <property type="match status" value="1"/>
</dbReference>
<dbReference type="FunFam" id="3.50.30.20:FF:000001">
    <property type="entry name" value="Carbamoyl-phosphate synthase small chain"/>
    <property type="match status" value="1"/>
</dbReference>
<dbReference type="Gene3D" id="3.40.50.880">
    <property type="match status" value="1"/>
</dbReference>
<dbReference type="Gene3D" id="3.50.30.20">
    <property type="entry name" value="Carbamoyl-phosphate synthase small subunit, N-terminal domain"/>
    <property type="match status" value="1"/>
</dbReference>
<dbReference type="HAMAP" id="MF_01209">
    <property type="entry name" value="CPSase_S_chain"/>
    <property type="match status" value="1"/>
</dbReference>
<dbReference type="InterPro" id="IPR050472">
    <property type="entry name" value="Anth_synth/Amidotransfase"/>
</dbReference>
<dbReference type="InterPro" id="IPR006274">
    <property type="entry name" value="CarbamoylP_synth_ssu"/>
</dbReference>
<dbReference type="InterPro" id="IPR002474">
    <property type="entry name" value="CarbamoylP_synth_ssu_N"/>
</dbReference>
<dbReference type="InterPro" id="IPR036480">
    <property type="entry name" value="CarbP_synth_ssu_N_sf"/>
</dbReference>
<dbReference type="InterPro" id="IPR029062">
    <property type="entry name" value="Class_I_gatase-like"/>
</dbReference>
<dbReference type="InterPro" id="IPR035686">
    <property type="entry name" value="CPSase_GATase1"/>
</dbReference>
<dbReference type="InterPro" id="IPR017926">
    <property type="entry name" value="GATASE"/>
</dbReference>
<dbReference type="NCBIfam" id="TIGR01368">
    <property type="entry name" value="CPSaseIIsmall"/>
    <property type="match status" value="1"/>
</dbReference>
<dbReference type="NCBIfam" id="NF009475">
    <property type="entry name" value="PRK12838.1"/>
    <property type="match status" value="1"/>
</dbReference>
<dbReference type="PANTHER" id="PTHR43418:SF7">
    <property type="entry name" value="CARBAMOYL-PHOSPHATE SYNTHASE SMALL CHAIN"/>
    <property type="match status" value="1"/>
</dbReference>
<dbReference type="PANTHER" id="PTHR43418">
    <property type="entry name" value="MULTIFUNCTIONAL TRYPTOPHAN BIOSYNTHESIS PROTEIN-RELATED"/>
    <property type="match status" value="1"/>
</dbReference>
<dbReference type="Pfam" id="PF00988">
    <property type="entry name" value="CPSase_sm_chain"/>
    <property type="match status" value="1"/>
</dbReference>
<dbReference type="Pfam" id="PF00117">
    <property type="entry name" value="GATase"/>
    <property type="match status" value="1"/>
</dbReference>
<dbReference type="PRINTS" id="PR00097">
    <property type="entry name" value="ANTSNTHASEII"/>
</dbReference>
<dbReference type="PRINTS" id="PR00099">
    <property type="entry name" value="CPSGATASE"/>
</dbReference>
<dbReference type="PRINTS" id="PR00096">
    <property type="entry name" value="GATASE"/>
</dbReference>
<dbReference type="SMART" id="SM01097">
    <property type="entry name" value="CPSase_sm_chain"/>
    <property type="match status" value="1"/>
</dbReference>
<dbReference type="SUPFAM" id="SSF52021">
    <property type="entry name" value="Carbamoyl phosphate synthetase, small subunit N-terminal domain"/>
    <property type="match status" value="1"/>
</dbReference>
<dbReference type="SUPFAM" id="SSF52317">
    <property type="entry name" value="Class I glutamine amidotransferase-like"/>
    <property type="match status" value="1"/>
</dbReference>
<dbReference type="PROSITE" id="PS51273">
    <property type="entry name" value="GATASE_TYPE_1"/>
    <property type="match status" value="1"/>
</dbReference>
<feature type="chain" id="PRO_0000112312" description="Carbamoyl phosphate synthase small chain">
    <location>
        <begin position="1"/>
        <end position="382"/>
    </location>
</feature>
<feature type="domain" description="Glutamine amidotransferase type-1" evidence="1">
    <location>
        <begin position="193"/>
        <end position="380"/>
    </location>
</feature>
<feature type="region of interest" description="CPSase" evidence="1">
    <location>
        <begin position="1"/>
        <end position="189"/>
    </location>
</feature>
<feature type="active site" description="Nucleophile" evidence="1">
    <location>
        <position position="269"/>
    </location>
</feature>
<feature type="active site" evidence="1">
    <location>
        <position position="353"/>
    </location>
</feature>
<feature type="active site" evidence="1">
    <location>
        <position position="355"/>
    </location>
</feature>
<feature type="binding site" evidence="1">
    <location>
        <position position="47"/>
    </location>
    <ligand>
        <name>L-glutamine</name>
        <dbReference type="ChEBI" id="CHEBI:58359"/>
    </ligand>
</feature>
<feature type="binding site" evidence="1">
    <location>
        <position position="241"/>
    </location>
    <ligand>
        <name>L-glutamine</name>
        <dbReference type="ChEBI" id="CHEBI:58359"/>
    </ligand>
</feature>
<feature type="binding site" evidence="1">
    <location>
        <position position="270"/>
    </location>
    <ligand>
        <name>L-glutamine</name>
        <dbReference type="ChEBI" id="CHEBI:58359"/>
    </ligand>
</feature>
<feature type="binding site" evidence="1">
    <location>
        <position position="273"/>
    </location>
    <ligand>
        <name>L-glutamine</name>
        <dbReference type="ChEBI" id="CHEBI:58359"/>
    </ligand>
</feature>
<feature type="binding site" evidence="1">
    <location>
        <position position="311"/>
    </location>
    <ligand>
        <name>L-glutamine</name>
        <dbReference type="ChEBI" id="CHEBI:58359"/>
    </ligand>
</feature>
<feature type="binding site" evidence="1">
    <location>
        <position position="313"/>
    </location>
    <ligand>
        <name>L-glutamine</name>
        <dbReference type="ChEBI" id="CHEBI:58359"/>
    </ligand>
</feature>
<feature type="binding site" evidence="1">
    <location>
        <position position="314"/>
    </location>
    <ligand>
        <name>L-glutamine</name>
        <dbReference type="ChEBI" id="CHEBI:58359"/>
    </ligand>
</feature>
<feature type="sequence conflict" description="In Ref. 3; AAB66481/AAO67800." evidence="2" ref="3">
    <original>S</original>
    <variation>G</variation>
    <location>
        <position position="243"/>
    </location>
</feature>
<organism>
    <name type="scientific">Salmonella typhi</name>
    <dbReference type="NCBI Taxonomy" id="90370"/>
    <lineage>
        <taxon>Bacteria</taxon>
        <taxon>Pseudomonadati</taxon>
        <taxon>Pseudomonadota</taxon>
        <taxon>Gammaproteobacteria</taxon>
        <taxon>Enterobacterales</taxon>
        <taxon>Enterobacteriaceae</taxon>
        <taxon>Salmonella</taxon>
    </lineage>
</organism>
<name>CARA_SALTI</name>
<gene>
    <name evidence="1" type="primary">carA</name>
    <name type="ordered locus">STY0076</name>
    <name type="ordered locus">t0067</name>
</gene>
<proteinExistence type="inferred from homology"/>
<comment type="function">
    <text evidence="1">Small subunit of the glutamine-dependent carbamoyl phosphate synthetase (CPSase). CPSase catalyzes the formation of carbamoyl phosphate from the ammonia moiety of glutamine, carbonate, and phosphate donated by ATP, constituting the first step of 2 biosynthetic pathways, one leading to arginine and/or urea and the other to pyrimidine nucleotides. The small subunit (glutamine amidotransferase) binds and cleaves glutamine to supply the large subunit with the substrate ammonia.</text>
</comment>
<comment type="catalytic activity">
    <reaction evidence="1">
        <text>hydrogencarbonate + L-glutamine + 2 ATP + H2O = carbamoyl phosphate + L-glutamate + 2 ADP + phosphate + 2 H(+)</text>
        <dbReference type="Rhea" id="RHEA:18633"/>
        <dbReference type="ChEBI" id="CHEBI:15377"/>
        <dbReference type="ChEBI" id="CHEBI:15378"/>
        <dbReference type="ChEBI" id="CHEBI:17544"/>
        <dbReference type="ChEBI" id="CHEBI:29985"/>
        <dbReference type="ChEBI" id="CHEBI:30616"/>
        <dbReference type="ChEBI" id="CHEBI:43474"/>
        <dbReference type="ChEBI" id="CHEBI:58228"/>
        <dbReference type="ChEBI" id="CHEBI:58359"/>
        <dbReference type="ChEBI" id="CHEBI:456216"/>
        <dbReference type="EC" id="6.3.5.5"/>
    </reaction>
</comment>
<comment type="catalytic activity">
    <molecule>Carbamoyl phosphate synthase small chain</molecule>
    <reaction evidence="1">
        <text>L-glutamine + H2O = L-glutamate + NH4(+)</text>
        <dbReference type="Rhea" id="RHEA:15889"/>
        <dbReference type="ChEBI" id="CHEBI:15377"/>
        <dbReference type="ChEBI" id="CHEBI:28938"/>
        <dbReference type="ChEBI" id="CHEBI:29985"/>
        <dbReference type="ChEBI" id="CHEBI:58359"/>
    </reaction>
</comment>
<comment type="pathway">
    <text evidence="1">Amino-acid biosynthesis; L-arginine biosynthesis; carbamoyl phosphate from bicarbonate: step 1/1.</text>
</comment>
<comment type="pathway">
    <text evidence="1">Pyrimidine metabolism; UMP biosynthesis via de novo pathway; (S)-dihydroorotate from bicarbonate: step 1/3.</text>
</comment>
<comment type="subunit">
    <text evidence="1">Composed of two chains; the small (or glutamine) chain promotes the hydrolysis of glutamine to ammonia, which is used by the large (or ammonia) chain to synthesize carbamoyl phosphate. Tetramer of heterodimers (alpha,beta)4.</text>
</comment>
<comment type="similarity">
    <text evidence="1">Belongs to the CarA family.</text>
</comment>
<comment type="sequence caution" evidence="2">
    <conflict type="frameshift">
        <sequence resource="EMBL-CDS" id="AAB66481"/>
    </conflict>
</comment>